<keyword id="KW-0028">Amino-acid biosynthesis</keyword>
<keyword id="KW-0057">Aromatic amino acid biosynthesis</keyword>
<keyword id="KW-0456">Lyase</keyword>
<keyword id="KW-0704">Schiff base</keyword>
<organism>
    <name type="scientific">Shigella dysenteriae</name>
    <dbReference type="NCBI Taxonomy" id="622"/>
    <lineage>
        <taxon>Bacteria</taxon>
        <taxon>Pseudomonadati</taxon>
        <taxon>Pseudomonadota</taxon>
        <taxon>Gammaproteobacteria</taxon>
        <taxon>Enterobacterales</taxon>
        <taxon>Enterobacteriaceae</taxon>
        <taxon>Shigella</taxon>
    </lineage>
</organism>
<feature type="chain" id="PRO_0000138807" description="3-dehydroquinate dehydratase">
    <location>
        <begin position="1"/>
        <end position="252"/>
    </location>
</feature>
<feature type="active site" description="Proton donor/acceptor" evidence="1">
    <location>
        <position position="143"/>
    </location>
</feature>
<feature type="active site" description="Schiff-base intermediate with substrate" evidence="1">
    <location>
        <position position="170"/>
    </location>
</feature>
<feature type="binding site" evidence="1">
    <location>
        <position position="21"/>
    </location>
    <ligand>
        <name>3-dehydroquinate</name>
        <dbReference type="ChEBI" id="CHEBI:32364"/>
    </ligand>
</feature>
<feature type="binding site" evidence="1">
    <location>
        <begin position="46"/>
        <end position="48"/>
    </location>
    <ligand>
        <name>3-dehydroquinate</name>
        <dbReference type="ChEBI" id="CHEBI:32364"/>
    </ligand>
</feature>
<feature type="binding site" evidence="1">
    <location>
        <position position="82"/>
    </location>
    <ligand>
        <name>3-dehydroquinate</name>
        <dbReference type="ChEBI" id="CHEBI:32364"/>
    </ligand>
</feature>
<feature type="binding site" evidence="1">
    <location>
        <position position="213"/>
    </location>
    <ligand>
        <name>3-dehydroquinate</name>
        <dbReference type="ChEBI" id="CHEBI:32364"/>
    </ligand>
</feature>
<feature type="binding site" evidence="1">
    <location>
        <position position="232"/>
    </location>
    <ligand>
        <name>3-dehydroquinate</name>
        <dbReference type="ChEBI" id="CHEBI:32364"/>
    </ligand>
</feature>
<feature type="binding site" evidence="1">
    <location>
        <position position="236"/>
    </location>
    <ligand>
        <name>3-dehydroquinate</name>
        <dbReference type="ChEBI" id="CHEBI:32364"/>
    </ligand>
</feature>
<accession>O87007</accession>
<evidence type="ECO:0000255" key="1">
    <source>
        <dbReference type="HAMAP-Rule" id="MF_00214"/>
    </source>
</evidence>
<protein>
    <recommendedName>
        <fullName evidence="1">3-dehydroquinate dehydratase</fullName>
        <shortName evidence="1">3-dehydroquinase</shortName>
        <ecNumber evidence="1">4.2.1.10</ecNumber>
    </recommendedName>
    <alternativeName>
        <fullName evidence="1">Type I DHQase</fullName>
    </alternativeName>
    <alternativeName>
        <fullName evidence="1">Type I dehydroquinase</fullName>
        <shortName evidence="1">DHQ1</shortName>
    </alternativeName>
</protein>
<sequence length="252" mass="27546">MKTVTVKDLVIGAGAPKIIVSLMAKDIARVKSEALAYRETDFDILEWRVDHFADLSNVESVMAAAKILRETMPEKPLLFTFRSAKEGGEQAISTEAYIALNRAAIDSGLVDMIDLELFTGDDQVKETVAYAHAHDVKVVMSNHDFHKTPEAEEIIARLRKMQSFDADIPKIALMPQSTSDVLTLLAATLEMQEQYADRPIITMSMAKTGVISRLAGEVFGSAATFGAVKKASAPGQISVNDLRILLTILHQA</sequence>
<name>AROD_SHIDY</name>
<gene>
    <name evidence="1" type="primary">aroD</name>
</gene>
<proteinExistence type="evidence at protein level"/>
<reference key="1">
    <citation type="journal article" date="1997" name="Microbiol. Immunol.">
        <title>Cloning and characterisation of the aroA and aroD genes of Shigella dysenteriae type 1.</title>
        <authorList>
            <person name="Walker J.C."/>
            <person name="Verma N.K."/>
        </authorList>
    </citation>
    <scope>NUCLEOTIDE SEQUENCE [GENOMIC DNA]</scope>
    <scope>CHARACTERIZATION</scope>
</reference>
<comment type="function">
    <text evidence="1">Involved in the third step of the chorismate pathway, which leads to the biosynthesis of aromatic amino acids. Catalyzes the cis-dehydration of 3-dehydroquinate (DHQ) and introduces the first double bond of the aromatic ring to yield 3-dehydroshikimate.</text>
</comment>
<comment type="catalytic activity">
    <reaction evidence="1">
        <text>3-dehydroquinate = 3-dehydroshikimate + H2O</text>
        <dbReference type="Rhea" id="RHEA:21096"/>
        <dbReference type="ChEBI" id="CHEBI:15377"/>
        <dbReference type="ChEBI" id="CHEBI:16630"/>
        <dbReference type="ChEBI" id="CHEBI:32364"/>
        <dbReference type="EC" id="4.2.1.10"/>
    </reaction>
</comment>
<comment type="pathway">
    <text evidence="1">Metabolic intermediate biosynthesis; chorismate biosynthesis; chorismate from D-erythrose 4-phosphate and phosphoenolpyruvate: step 3/7.</text>
</comment>
<comment type="subunit">
    <text evidence="1">Homodimer.</text>
</comment>
<comment type="similarity">
    <text evidence="1">Belongs to the type-I 3-dehydroquinase family.</text>
</comment>
<dbReference type="EC" id="4.2.1.10" evidence="1"/>
<dbReference type="EMBL" id="U82269">
    <property type="protein sequence ID" value="AAC32746.1"/>
    <property type="molecule type" value="Genomic_DNA"/>
</dbReference>
<dbReference type="SMR" id="O87007"/>
<dbReference type="UniPathway" id="UPA00053">
    <property type="reaction ID" value="UER00086"/>
</dbReference>
<dbReference type="GO" id="GO:0003855">
    <property type="term" value="F:3-dehydroquinate dehydratase activity"/>
    <property type="evidence" value="ECO:0007669"/>
    <property type="project" value="UniProtKB-UniRule"/>
</dbReference>
<dbReference type="GO" id="GO:0046279">
    <property type="term" value="P:3,4-dihydroxybenzoate biosynthetic process"/>
    <property type="evidence" value="ECO:0007669"/>
    <property type="project" value="UniProtKB-ARBA"/>
</dbReference>
<dbReference type="GO" id="GO:0008652">
    <property type="term" value="P:amino acid biosynthetic process"/>
    <property type="evidence" value="ECO:0007669"/>
    <property type="project" value="UniProtKB-KW"/>
</dbReference>
<dbReference type="GO" id="GO:0009073">
    <property type="term" value="P:aromatic amino acid family biosynthetic process"/>
    <property type="evidence" value="ECO:0007669"/>
    <property type="project" value="UniProtKB-KW"/>
</dbReference>
<dbReference type="GO" id="GO:0009423">
    <property type="term" value="P:chorismate biosynthetic process"/>
    <property type="evidence" value="ECO:0007669"/>
    <property type="project" value="UniProtKB-UniRule"/>
</dbReference>
<dbReference type="CDD" id="cd00502">
    <property type="entry name" value="DHQase_I"/>
    <property type="match status" value="1"/>
</dbReference>
<dbReference type="FunFam" id="3.20.20.70:FF:000047">
    <property type="entry name" value="3-dehydroquinate dehydratase"/>
    <property type="match status" value="1"/>
</dbReference>
<dbReference type="Gene3D" id="3.20.20.70">
    <property type="entry name" value="Aldolase class I"/>
    <property type="match status" value="1"/>
</dbReference>
<dbReference type="HAMAP" id="MF_00214">
    <property type="entry name" value="AroD"/>
    <property type="match status" value="1"/>
</dbReference>
<dbReference type="InterPro" id="IPR018508">
    <property type="entry name" value="3-dehydroquinate_DH_AS"/>
</dbReference>
<dbReference type="InterPro" id="IPR013785">
    <property type="entry name" value="Aldolase_TIM"/>
</dbReference>
<dbReference type="InterPro" id="IPR001381">
    <property type="entry name" value="DHquinase_I"/>
</dbReference>
<dbReference type="InterPro" id="IPR050146">
    <property type="entry name" value="Type-I_3-dehydroquinase"/>
</dbReference>
<dbReference type="NCBIfam" id="TIGR01093">
    <property type="entry name" value="aroD"/>
    <property type="match status" value="1"/>
</dbReference>
<dbReference type="PANTHER" id="PTHR43699">
    <property type="entry name" value="3-DEHYDROQUINATE DEHYDRATASE"/>
    <property type="match status" value="1"/>
</dbReference>
<dbReference type="PANTHER" id="PTHR43699:SF1">
    <property type="entry name" value="3-DEHYDROQUINATE DEHYDRATASE"/>
    <property type="match status" value="1"/>
</dbReference>
<dbReference type="Pfam" id="PF01487">
    <property type="entry name" value="DHquinase_I"/>
    <property type="match status" value="1"/>
</dbReference>
<dbReference type="SUPFAM" id="SSF51569">
    <property type="entry name" value="Aldolase"/>
    <property type="match status" value="1"/>
</dbReference>
<dbReference type="PROSITE" id="PS01028">
    <property type="entry name" value="DEHYDROQUINASE_I"/>
    <property type="match status" value="1"/>
</dbReference>